<comment type="function">
    <text evidence="1">NDH-1 shuttles electrons from NADH, via FMN and iron-sulfur (Fe-S) centers, to quinones in the respiratory chain. The immediate electron acceptor for the enzyme in this species is believed to be ubiquinone. Couples the redox reaction to proton translocation (for every two electrons transferred, four hydrogen ions are translocated across the cytoplasmic membrane), and thus conserves the redox energy in a proton gradient.</text>
</comment>
<comment type="catalytic activity">
    <reaction evidence="1">
        <text>a quinone + NADH + 5 H(+)(in) = a quinol + NAD(+) + 4 H(+)(out)</text>
        <dbReference type="Rhea" id="RHEA:57888"/>
        <dbReference type="ChEBI" id="CHEBI:15378"/>
        <dbReference type="ChEBI" id="CHEBI:24646"/>
        <dbReference type="ChEBI" id="CHEBI:57540"/>
        <dbReference type="ChEBI" id="CHEBI:57945"/>
        <dbReference type="ChEBI" id="CHEBI:132124"/>
    </reaction>
</comment>
<comment type="subunit">
    <text evidence="1">NDH-1 is composed of 14 different subunits. Subunits NuoB, C, D, E, F, and G constitute the peripheral sector of the complex.</text>
</comment>
<comment type="subcellular location">
    <subcellularLocation>
        <location evidence="1">Cell inner membrane</location>
        <topology evidence="1">Peripheral membrane protein</topology>
        <orientation evidence="1">Cytoplasmic side</orientation>
    </subcellularLocation>
</comment>
<comment type="similarity">
    <text evidence="1">Belongs to the complex I 30 kDa subunit family.</text>
</comment>
<dbReference type="EC" id="7.1.1.-" evidence="1"/>
<dbReference type="EMBL" id="CP000708">
    <property type="protein sequence ID" value="ABQ61052.1"/>
    <property type="molecule type" value="Genomic_DNA"/>
</dbReference>
<dbReference type="RefSeq" id="WP_002967574.1">
    <property type="nucleotide sequence ID" value="NC_009505.1"/>
</dbReference>
<dbReference type="SMR" id="A5VPY5"/>
<dbReference type="KEGG" id="bov:BOV_0799"/>
<dbReference type="HOGENOM" id="CLU_042628_2_1_5"/>
<dbReference type="PhylomeDB" id="A5VPY5"/>
<dbReference type="Proteomes" id="UP000006383">
    <property type="component" value="Chromosome I"/>
</dbReference>
<dbReference type="GO" id="GO:0005886">
    <property type="term" value="C:plasma membrane"/>
    <property type="evidence" value="ECO:0007669"/>
    <property type="project" value="UniProtKB-SubCell"/>
</dbReference>
<dbReference type="GO" id="GO:0008137">
    <property type="term" value="F:NADH dehydrogenase (ubiquinone) activity"/>
    <property type="evidence" value="ECO:0007669"/>
    <property type="project" value="InterPro"/>
</dbReference>
<dbReference type="GO" id="GO:0050136">
    <property type="term" value="F:NADH:ubiquinone reductase (non-electrogenic) activity"/>
    <property type="evidence" value="ECO:0007669"/>
    <property type="project" value="UniProtKB-UniRule"/>
</dbReference>
<dbReference type="GO" id="GO:0048038">
    <property type="term" value="F:quinone binding"/>
    <property type="evidence" value="ECO:0007669"/>
    <property type="project" value="UniProtKB-KW"/>
</dbReference>
<dbReference type="Gene3D" id="3.30.460.80">
    <property type="entry name" value="NADH:ubiquinone oxidoreductase, 30kDa subunit"/>
    <property type="match status" value="1"/>
</dbReference>
<dbReference type="HAMAP" id="MF_01357">
    <property type="entry name" value="NDH1_NuoC"/>
    <property type="match status" value="1"/>
</dbReference>
<dbReference type="InterPro" id="IPR010218">
    <property type="entry name" value="NADH_DH_suC"/>
</dbReference>
<dbReference type="InterPro" id="IPR037232">
    <property type="entry name" value="NADH_quin_OxRdtase_su_C/D-like"/>
</dbReference>
<dbReference type="InterPro" id="IPR001268">
    <property type="entry name" value="NADH_UbQ_OxRdtase_30kDa_su"/>
</dbReference>
<dbReference type="InterPro" id="IPR020396">
    <property type="entry name" value="NADH_UbQ_OxRdtase_CS"/>
</dbReference>
<dbReference type="NCBIfam" id="TIGR01961">
    <property type="entry name" value="NuoC_fam"/>
    <property type="match status" value="1"/>
</dbReference>
<dbReference type="NCBIfam" id="NF004730">
    <property type="entry name" value="PRK06074.1-1"/>
    <property type="match status" value="1"/>
</dbReference>
<dbReference type="NCBIfam" id="NF004733">
    <property type="entry name" value="PRK06074.1-5"/>
    <property type="match status" value="1"/>
</dbReference>
<dbReference type="PANTHER" id="PTHR10884:SF14">
    <property type="entry name" value="NADH DEHYDROGENASE [UBIQUINONE] IRON-SULFUR PROTEIN 3, MITOCHONDRIAL"/>
    <property type="match status" value="1"/>
</dbReference>
<dbReference type="PANTHER" id="PTHR10884">
    <property type="entry name" value="NADH DEHYDROGENASE UBIQUINONE IRON-SULFUR PROTEIN 3"/>
    <property type="match status" value="1"/>
</dbReference>
<dbReference type="Pfam" id="PF00329">
    <property type="entry name" value="Complex1_30kDa"/>
    <property type="match status" value="1"/>
</dbReference>
<dbReference type="SUPFAM" id="SSF143243">
    <property type="entry name" value="Nqo5-like"/>
    <property type="match status" value="1"/>
</dbReference>
<dbReference type="PROSITE" id="PS00542">
    <property type="entry name" value="COMPLEX1_30K"/>
    <property type="match status" value="1"/>
</dbReference>
<organism>
    <name type="scientific">Brucella ovis (strain ATCC 25840 / 63/290 / NCTC 10512)</name>
    <dbReference type="NCBI Taxonomy" id="444178"/>
    <lineage>
        <taxon>Bacteria</taxon>
        <taxon>Pseudomonadati</taxon>
        <taxon>Pseudomonadota</taxon>
        <taxon>Alphaproteobacteria</taxon>
        <taxon>Hyphomicrobiales</taxon>
        <taxon>Brucellaceae</taxon>
        <taxon>Brucella/Ochrobactrum group</taxon>
        <taxon>Brucella</taxon>
    </lineage>
</organism>
<keyword id="KW-0997">Cell inner membrane</keyword>
<keyword id="KW-1003">Cell membrane</keyword>
<keyword id="KW-0472">Membrane</keyword>
<keyword id="KW-0520">NAD</keyword>
<keyword id="KW-0874">Quinone</keyword>
<keyword id="KW-1278">Translocase</keyword>
<keyword id="KW-0813">Transport</keyword>
<keyword id="KW-0830">Ubiquinone</keyword>
<accession>A5VPY5</accession>
<evidence type="ECO:0000255" key="1">
    <source>
        <dbReference type="HAMAP-Rule" id="MF_01357"/>
    </source>
</evidence>
<reference key="1">
    <citation type="journal article" date="2009" name="PLoS ONE">
        <title>Genome degradation in Brucella ovis corresponds with narrowing of its host range and tissue tropism.</title>
        <authorList>
            <person name="Tsolis R.M."/>
            <person name="Seshadri R."/>
            <person name="Santos R.L."/>
            <person name="Sangari F.J."/>
            <person name="Lobo J.M."/>
            <person name="de Jong M.F."/>
            <person name="Ren Q."/>
            <person name="Myers G."/>
            <person name="Brinkac L.M."/>
            <person name="Nelson W.C."/>
            <person name="Deboy R.T."/>
            <person name="Angiuoli S."/>
            <person name="Khouri H."/>
            <person name="Dimitrov G."/>
            <person name="Robinson J.R."/>
            <person name="Mulligan S."/>
            <person name="Walker R.L."/>
            <person name="Elzer P.E."/>
            <person name="Hassan K.A."/>
            <person name="Paulsen I.T."/>
        </authorList>
    </citation>
    <scope>NUCLEOTIDE SEQUENCE [LARGE SCALE GENOMIC DNA]</scope>
    <source>
        <strain>ATCC 25840 / 63/290 / NCTC 10512</strain>
    </source>
</reference>
<gene>
    <name evidence="1" type="primary">nuoC</name>
    <name type="ordered locus">BOV_0799</name>
</gene>
<feature type="chain" id="PRO_0000358055" description="NADH-quinone oxidoreductase subunit C">
    <location>
        <begin position="1"/>
        <end position="202"/>
    </location>
</feature>
<sequence>MSEEALGELSGYIRERLGDAIEEANLAYGELTLCVPVASLIGVLTFLRDDVQCQFVNLTDISGVDYPQREKRFDVVYQLLSPRQNQRIRVKVQADEDTLVPSAVPVFFGAEWYEREAYDMYGILFSGHPDLRRILTDYGFEGHPLRKDFPLTGFVEVRYNDELKRVVYEPVQLRQEFRNFDFLSPWEGTDYVLPGDEKAKTN</sequence>
<name>NUOC_BRUO2</name>
<protein>
    <recommendedName>
        <fullName evidence="1">NADH-quinone oxidoreductase subunit C</fullName>
        <ecNumber evidence="1">7.1.1.-</ecNumber>
    </recommendedName>
    <alternativeName>
        <fullName evidence="1">NADH dehydrogenase I subunit C</fullName>
    </alternativeName>
    <alternativeName>
        <fullName evidence="1">NDH-1 subunit C</fullName>
    </alternativeName>
</protein>
<proteinExistence type="inferred from homology"/>